<protein>
    <recommendedName>
        <fullName evidence="1">Ribulose bisphosphate carboxylase large chain</fullName>
        <shortName evidence="1">RuBisCO large subunit</shortName>
        <ecNumber evidence="1">4.1.1.39</ecNumber>
    </recommendedName>
</protein>
<proteinExistence type="inferred from homology"/>
<gene>
    <name evidence="1" type="primary">rbcL</name>
</gene>
<geneLocation type="chloroplast"/>
<keyword id="KW-0113">Calvin cycle</keyword>
<keyword id="KW-0120">Carbon dioxide fixation</keyword>
<keyword id="KW-0150">Chloroplast</keyword>
<keyword id="KW-1015">Disulfide bond</keyword>
<keyword id="KW-0456">Lyase</keyword>
<keyword id="KW-0460">Magnesium</keyword>
<keyword id="KW-0479">Metal-binding</keyword>
<keyword id="KW-0488">Methylation</keyword>
<keyword id="KW-0503">Monooxygenase</keyword>
<keyword id="KW-0560">Oxidoreductase</keyword>
<keyword id="KW-0601">Photorespiration</keyword>
<keyword id="KW-0602">Photosynthesis</keyword>
<keyword id="KW-0934">Plastid</keyword>
<dbReference type="EC" id="4.1.1.39" evidence="1"/>
<dbReference type="EMBL" id="L14389">
    <property type="protein sequence ID" value="AAA19750.1"/>
    <property type="molecule type" value="Genomic_DNA"/>
</dbReference>
<dbReference type="SMR" id="P36478"/>
<dbReference type="GO" id="GO:0009507">
    <property type="term" value="C:chloroplast"/>
    <property type="evidence" value="ECO:0007669"/>
    <property type="project" value="UniProtKB-SubCell"/>
</dbReference>
<dbReference type="GO" id="GO:0000287">
    <property type="term" value="F:magnesium ion binding"/>
    <property type="evidence" value="ECO:0007669"/>
    <property type="project" value="InterPro"/>
</dbReference>
<dbReference type="GO" id="GO:0004497">
    <property type="term" value="F:monooxygenase activity"/>
    <property type="evidence" value="ECO:0007669"/>
    <property type="project" value="UniProtKB-KW"/>
</dbReference>
<dbReference type="GO" id="GO:0016984">
    <property type="term" value="F:ribulose-bisphosphate carboxylase activity"/>
    <property type="evidence" value="ECO:0007669"/>
    <property type="project" value="UniProtKB-EC"/>
</dbReference>
<dbReference type="GO" id="GO:0009853">
    <property type="term" value="P:photorespiration"/>
    <property type="evidence" value="ECO:0007669"/>
    <property type="project" value="UniProtKB-KW"/>
</dbReference>
<dbReference type="GO" id="GO:0019253">
    <property type="term" value="P:reductive pentose-phosphate cycle"/>
    <property type="evidence" value="ECO:0007669"/>
    <property type="project" value="UniProtKB-KW"/>
</dbReference>
<dbReference type="CDD" id="cd08212">
    <property type="entry name" value="RuBisCO_large_I"/>
    <property type="match status" value="1"/>
</dbReference>
<dbReference type="FunFam" id="3.20.20.110:FF:000001">
    <property type="entry name" value="Ribulose bisphosphate carboxylase large chain"/>
    <property type="match status" value="1"/>
</dbReference>
<dbReference type="FunFam" id="3.30.70.150:FF:000001">
    <property type="entry name" value="Ribulose bisphosphate carboxylase large chain"/>
    <property type="match status" value="1"/>
</dbReference>
<dbReference type="Gene3D" id="3.20.20.110">
    <property type="entry name" value="Ribulose bisphosphate carboxylase, large subunit, C-terminal domain"/>
    <property type="match status" value="1"/>
</dbReference>
<dbReference type="Gene3D" id="3.30.70.150">
    <property type="entry name" value="RuBisCO large subunit, N-terminal domain"/>
    <property type="match status" value="1"/>
</dbReference>
<dbReference type="HAMAP" id="MF_01338">
    <property type="entry name" value="RuBisCO_L_type1"/>
    <property type="match status" value="1"/>
</dbReference>
<dbReference type="InterPro" id="IPR033966">
    <property type="entry name" value="RuBisCO"/>
</dbReference>
<dbReference type="InterPro" id="IPR020878">
    <property type="entry name" value="RuBisCo_large_chain_AS"/>
</dbReference>
<dbReference type="InterPro" id="IPR000685">
    <property type="entry name" value="RuBisCO_lsu_C"/>
</dbReference>
<dbReference type="InterPro" id="IPR036376">
    <property type="entry name" value="RuBisCO_lsu_C_sf"/>
</dbReference>
<dbReference type="InterPro" id="IPR017443">
    <property type="entry name" value="RuBisCO_lsu_fd_N"/>
</dbReference>
<dbReference type="InterPro" id="IPR036422">
    <property type="entry name" value="RuBisCO_lsu_N_sf"/>
</dbReference>
<dbReference type="InterPro" id="IPR020888">
    <property type="entry name" value="RuBisCO_lsuI"/>
</dbReference>
<dbReference type="NCBIfam" id="NF003252">
    <property type="entry name" value="PRK04208.1"/>
    <property type="match status" value="1"/>
</dbReference>
<dbReference type="PANTHER" id="PTHR42704">
    <property type="entry name" value="RIBULOSE BISPHOSPHATE CARBOXYLASE"/>
    <property type="match status" value="1"/>
</dbReference>
<dbReference type="PANTHER" id="PTHR42704:SF15">
    <property type="entry name" value="RIBULOSE BISPHOSPHATE CARBOXYLASE LARGE CHAIN"/>
    <property type="match status" value="1"/>
</dbReference>
<dbReference type="Pfam" id="PF00016">
    <property type="entry name" value="RuBisCO_large"/>
    <property type="match status" value="1"/>
</dbReference>
<dbReference type="Pfam" id="PF02788">
    <property type="entry name" value="RuBisCO_large_N"/>
    <property type="match status" value="1"/>
</dbReference>
<dbReference type="SFLD" id="SFLDG01052">
    <property type="entry name" value="RuBisCO"/>
    <property type="match status" value="1"/>
</dbReference>
<dbReference type="SFLD" id="SFLDS00014">
    <property type="entry name" value="RuBisCO"/>
    <property type="match status" value="1"/>
</dbReference>
<dbReference type="SFLD" id="SFLDG00301">
    <property type="entry name" value="RuBisCO-like_proteins"/>
    <property type="match status" value="1"/>
</dbReference>
<dbReference type="SUPFAM" id="SSF51649">
    <property type="entry name" value="RuBisCo, C-terminal domain"/>
    <property type="match status" value="1"/>
</dbReference>
<dbReference type="SUPFAM" id="SSF54966">
    <property type="entry name" value="RuBisCO, large subunit, small (N-terminal) domain"/>
    <property type="match status" value="1"/>
</dbReference>
<dbReference type="PROSITE" id="PS00157">
    <property type="entry name" value="RUBISCO_LARGE"/>
    <property type="match status" value="1"/>
</dbReference>
<accession>P36478</accession>
<name>RBL_ANTGA</name>
<organism>
    <name type="scientific">Anthocleista grandiflora</name>
    <name type="common">Forest fever tree</name>
    <name type="synonym">Anthocleista zambesiaca</name>
    <dbReference type="NCBI Taxonomy" id="28539"/>
    <lineage>
        <taxon>Eukaryota</taxon>
        <taxon>Viridiplantae</taxon>
        <taxon>Streptophyta</taxon>
        <taxon>Embryophyta</taxon>
        <taxon>Tracheophyta</taxon>
        <taxon>Spermatophyta</taxon>
        <taxon>Magnoliopsida</taxon>
        <taxon>eudicotyledons</taxon>
        <taxon>Gunneridae</taxon>
        <taxon>Pentapetalae</taxon>
        <taxon>asterids</taxon>
        <taxon>lamiids</taxon>
        <taxon>Gentianales</taxon>
        <taxon>Gentianaceae</taxon>
        <taxon>Potalieae</taxon>
        <taxon>Potaliinae</taxon>
        <taxon>Anthocleista</taxon>
    </lineage>
</organism>
<reference key="1">
    <citation type="journal article" date="1993" name="Ann. Mo. Bot. Gard.">
        <title>A parsimony analysis of the Asteridae sensu lato based on rbcL sequences.</title>
        <authorList>
            <person name="Olmstead R.G."/>
            <person name="Bremer B."/>
            <person name="Scott K.M."/>
            <person name="Palmer J.D."/>
        </authorList>
        <dbReference type="AGRICOLA" id="IND93053816"/>
    </citation>
    <scope>NUCLEOTIDE SEQUENCE [GENOMIC DNA]</scope>
</reference>
<sequence length="471" mass="52183">SVGFKAGVKEYKLTYYTPEYETKDTDILAAFRVTPQPGVPPEEAGAAVAAESSTGTWTTVWTDGLTSLDRYKGRCYGIEPVPGEENQYIAYVAYPLDLFEEGSVTNMFTSIVGNVFGFKALRALRLEDLRIPTAYIKTFQGPPHGIQVERDKLNKYGRPLLGCTIKPKLGLSAKNYGRAVYECLRGGLDFTKDDETVTSQPFMRWRDRFLFRAEAIYKAQAEPGEIKGHYLNATAGTCEEMMKRAVFARELGIPIVMHDYLTGGFTANTSLAHYCRDNGLLLHIHRAMHAVIDRQKNHGMHFRLLAKALRMSGGDHIHAGTVVGKLEGERDITLGFVDLLRDDFIENDRSRGIYFTQDWVSLPGVIPVASGGIHVWHMPALTEIFGDDSVLQFGGGTLGHPWGNAPGAVANRVALEACVQARNEGRDLAAEGNEIIREASKWSPELAAACEIWKEIRFNFAAMDTLDPLKS</sequence>
<evidence type="ECO:0000255" key="1">
    <source>
        <dbReference type="HAMAP-Rule" id="MF_01338"/>
    </source>
</evidence>
<feature type="chain" id="PRO_0000062351" description="Ribulose bisphosphate carboxylase large chain">
    <location>
        <begin position="1" status="less than"/>
        <end position="471"/>
    </location>
</feature>
<feature type="active site" description="Proton acceptor" evidence="1">
    <location>
        <position position="166"/>
    </location>
</feature>
<feature type="active site" description="Proton acceptor" evidence="1">
    <location>
        <position position="285"/>
    </location>
</feature>
<feature type="binding site" description="in homodimeric partner" evidence="1">
    <location>
        <position position="114"/>
    </location>
    <ligand>
        <name>substrate</name>
    </ligand>
</feature>
<feature type="binding site" evidence="1">
    <location>
        <position position="164"/>
    </location>
    <ligand>
        <name>substrate</name>
    </ligand>
</feature>
<feature type="binding site" evidence="1">
    <location>
        <position position="168"/>
    </location>
    <ligand>
        <name>substrate</name>
    </ligand>
</feature>
<feature type="binding site" description="via carbamate group" evidence="1">
    <location>
        <position position="192"/>
    </location>
    <ligand>
        <name>Mg(2+)</name>
        <dbReference type="ChEBI" id="CHEBI:18420"/>
    </ligand>
</feature>
<feature type="binding site" evidence="1">
    <location>
        <position position="194"/>
    </location>
    <ligand>
        <name>Mg(2+)</name>
        <dbReference type="ChEBI" id="CHEBI:18420"/>
    </ligand>
</feature>
<feature type="binding site" evidence="1">
    <location>
        <position position="195"/>
    </location>
    <ligand>
        <name>Mg(2+)</name>
        <dbReference type="ChEBI" id="CHEBI:18420"/>
    </ligand>
</feature>
<feature type="binding site" evidence="1">
    <location>
        <position position="286"/>
    </location>
    <ligand>
        <name>substrate</name>
    </ligand>
</feature>
<feature type="binding site" evidence="1">
    <location>
        <position position="318"/>
    </location>
    <ligand>
        <name>substrate</name>
    </ligand>
</feature>
<feature type="binding site" evidence="1">
    <location>
        <position position="370"/>
    </location>
    <ligand>
        <name>substrate</name>
    </ligand>
</feature>
<feature type="site" description="Transition state stabilizer" evidence="1">
    <location>
        <position position="325"/>
    </location>
</feature>
<feature type="modified residue" description="N6,N6,N6-trimethyllysine" evidence="1">
    <location>
        <position position="5"/>
    </location>
</feature>
<feature type="modified residue" description="N6-carboxylysine" evidence="1">
    <location>
        <position position="192"/>
    </location>
</feature>
<feature type="disulfide bond" description="Interchain; in linked form" evidence="1">
    <location>
        <position position="238"/>
    </location>
</feature>
<feature type="non-terminal residue">
    <location>
        <position position="1"/>
    </location>
</feature>
<comment type="function">
    <text evidence="1">RuBisCO catalyzes two reactions: the carboxylation of D-ribulose 1,5-bisphosphate, the primary event in carbon dioxide fixation, as well as the oxidative fragmentation of the pentose substrate in the photorespiration process. Both reactions occur simultaneously and in competition at the same active site.</text>
</comment>
<comment type="catalytic activity">
    <reaction evidence="1">
        <text>2 (2R)-3-phosphoglycerate + 2 H(+) = D-ribulose 1,5-bisphosphate + CO2 + H2O</text>
        <dbReference type="Rhea" id="RHEA:23124"/>
        <dbReference type="ChEBI" id="CHEBI:15377"/>
        <dbReference type="ChEBI" id="CHEBI:15378"/>
        <dbReference type="ChEBI" id="CHEBI:16526"/>
        <dbReference type="ChEBI" id="CHEBI:57870"/>
        <dbReference type="ChEBI" id="CHEBI:58272"/>
        <dbReference type="EC" id="4.1.1.39"/>
    </reaction>
</comment>
<comment type="catalytic activity">
    <reaction evidence="1">
        <text>D-ribulose 1,5-bisphosphate + O2 = 2-phosphoglycolate + (2R)-3-phosphoglycerate + 2 H(+)</text>
        <dbReference type="Rhea" id="RHEA:36631"/>
        <dbReference type="ChEBI" id="CHEBI:15378"/>
        <dbReference type="ChEBI" id="CHEBI:15379"/>
        <dbReference type="ChEBI" id="CHEBI:57870"/>
        <dbReference type="ChEBI" id="CHEBI:58033"/>
        <dbReference type="ChEBI" id="CHEBI:58272"/>
    </reaction>
</comment>
<comment type="cofactor">
    <cofactor evidence="1">
        <name>Mg(2+)</name>
        <dbReference type="ChEBI" id="CHEBI:18420"/>
    </cofactor>
    <text evidence="1">Binds 1 Mg(2+) ion per subunit.</text>
</comment>
<comment type="subunit">
    <text evidence="1">Heterohexadecamer of 8 large chains and 8 small chains; disulfide-linked. The disulfide link is formed within the large subunit homodimers.</text>
</comment>
<comment type="subcellular location">
    <subcellularLocation>
        <location>Plastid</location>
        <location>Chloroplast</location>
    </subcellularLocation>
</comment>
<comment type="PTM">
    <text evidence="1">The disulfide bond which can form in the large chain dimeric partners within the hexadecamer appears to be associated with oxidative stress and protein turnover.</text>
</comment>
<comment type="miscellaneous">
    <text evidence="1">The basic functional RuBisCO is composed of a large chain homodimer in a 'head-to-tail' conformation. In form I RuBisCO this homodimer is arranged in a barrel-like tetramer with the small subunits forming a tetrameric 'cap' on each end of the 'barrel'.</text>
</comment>
<comment type="similarity">
    <text evidence="1">Belongs to the RuBisCO large chain family. Type I subfamily.</text>
</comment>